<evidence type="ECO:0000250" key="1"/>
<evidence type="ECO:0000250" key="2">
    <source>
        <dbReference type="UniProtKB" id="D6W3G1"/>
    </source>
</evidence>
<evidence type="ECO:0000250" key="3">
    <source>
        <dbReference type="UniProtKB" id="P38991"/>
    </source>
</evidence>
<evidence type="ECO:0000255" key="4">
    <source>
        <dbReference type="PROSITE-ProRule" id="PRU00159"/>
    </source>
</evidence>
<evidence type="ECO:0000255" key="5">
    <source>
        <dbReference type="PROSITE-ProRule" id="PRU10027"/>
    </source>
</evidence>
<evidence type="ECO:0000256" key="6">
    <source>
        <dbReference type="SAM" id="MobiDB-lite"/>
    </source>
</evidence>
<proteinExistence type="inferred from homology"/>
<dbReference type="EC" id="2.7.11.1" evidence="3"/>
<dbReference type="EMBL" id="CR382135">
    <property type="protein sequence ID" value="CAG85914.2"/>
    <property type="molecule type" value="Genomic_DNA"/>
</dbReference>
<dbReference type="RefSeq" id="XP_457869.2">
    <property type="nucleotide sequence ID" value="XM_457869.1"/>
</dbReference>
<dbReference type="SMR" id="Q6BVA0"/>
<dbReference type="FunCoup" id="Q6BVA0">
    <property type="interactions" value="1139"/>
</dbReference>
<dbReference type="STRING" id="284592.Q6BVA0"/>
<dbReference type="GeneID" id="2900232"/>
<dbReference type="KEGG" id="dha:DEHA2C04246g"/>
<dbReference type="VEuPathDB" id="FungiDB:DEHA2C04246g"/>
<dbReference type="eggNOG" id="KOG0580">
    <property type="taxonomic scope" value="Eukaryota"/>
</dbReference>
<dbReference type="HOGENOM" id="CLU_000288_63_6_1"/>
<dbReference type="InParanoid" id="Q6BVA0"/>
<dbReference type="OMA" id="ESRFPEW"/>
<dbReference type="OrthoDB" id="377346at2759"/>
<dbReference type="Proteomes" id="UP000000599">
    <property type="component" value="Chromosome C"/>
</dbReference>
<dbReference type="GO" id="GO:0005737">
    <property type="term" value="C:cytoplasm"/>
    <property type="evidence" value="ECO:0007669"/>
    <property type="project" value="UniProtKB-KW"/>
</dbReference>
<dbReference type="GO" id="GO:0000776">
    <property type="term" value="C:kinetochore"/>
    <property type="evidence" value="ECO:0007669"/>
    <property type="project" value="UniProtKB-KW"/>
</dbReference>
<dbReference type="GO" id="GO:0005634">
    <property type="term" value="C:nucleus"/>
    <property type="evidence" value="ECO:0007669"/>
    <property type="project" value="UniProtKB-SubCell"/>
</dbReference>
<dbReference type="GO" id="GO:0005819">
    <property type="term" value="C:spindle"/>
    <property type="evidence" value="ECO:0007669"/>
    <property type="project" value="UniProtKB-SubCell"/>
</dbReference>
<dbReference type="GO" id="GO:0005524">
    <property type="term" value="F:ATP binding"/>
    <property type="evidence" value="ECO:0007669"/>
    <property type="project" value="UniProtKB-KW"/>
</dbReference>
<dbReference type="GO" id="GO:0106310">
    <property type="term" value="F:protein serine kinase activity"/>
    <property type="evidence" value="ECO:0007669"/>
    <property type="project" value="RHEA"/>
</dbReference>
<dbReference type="GO" id="GO:0004674">
    <property type="term" value="F:protein serine/threonine kinase activity"/>
    <property type="evidence" value="ECO:0007669"/>
    <property type="project" value="UniProtKB-KW"/>
</dbReference>
<dbReference type="GO" id="GO:0007059">
    <property type="term" value="P:chromosome segregation"/>
    <property type="evidence" value="ECO:0007669"/>
    <property type="project" value="UniProtKB-KW"/>
</dbReference>
<dbReference type="CDD" id="cd14007">
    <property type="entry name" value="STKc_Aurora"/>
    <property type="match status" value="1"/>
</dbReference>
<dbReference type="FunFam" id="3.30.200.20:FF:000042">
    <property type="entry name" value="Aurora kinase A"/>
    <property type="match status" value="1"/>
</dbReference>
<dbReference type="FunFam" id="1.10.510.10:FF:000235">
    <property type="entry name" value="Serine/threonine-protein kinase ark1"/>
    <property type="match status" value="1"/>
</dbReference>
<dbReference type="Gene3D" id="1.10.510.10">
    <property type="entry name" value="Transferase(Phosphotransferase) domain 1"/>
    <property type="match status" value="1"/>
</dbReference>
<dbReference type="InterPro" id="IPR030616">
    <property type="entry name" value="Aur-like"/>
</dbReference>
<dbReference type="InterPro" id="IPR011009">
    <property type="entry name" value="Kinase-like_dom_sf"/>
</dbReference>
<dbReference type="InterPro" id="IPR000719">
    <property type="entry name" value="Prot_kinase_dom"/>
</dbReference>
<dbReference type="InterPro" id="IPR008271">
    <property type="entry name" value="Ser/Thr_kinase_AS"/>
</dbReference>
<dbReference type="PANTHER" id="PTHR24350">
    <property type="entry name" value="SERINE/THREONINE-PROTEIN KINASE IAL-RELATED"/>
    <property type="match status" value="1"/>
</dbReference>
<dbReference type="Pfam" id="PF00069">
    <property type="entry name" value="Pkinase"/>
    <property type="match status" value="1"/>
</dbReference>
<dbReference type="SMART" id="SM00220">
    <property type="entry name" value="S_TKc"/>
    <property type="match status" value="1"/>
</dbReference>
<dbReference type="SUPFAM" id="SSF56112">
    <property type="entry name" value="Protein kinase-like (PK-like)"/>
    <property type="match status" value="1"/>
</dbReference>
<dbReference type="PROSITE" id="PS50011">
    <property type="entry name" value="PROTEIN_KINASE_DOM"/>
    <property type="match status" value="1"/>
</dbReference>
<dbReference type="PROSITE" id="PS00108">
    <property type="entry name" value="PROTEIN_KINASE_ST"/>
    <property type="match status" value="1"/>
</dbReference>
<reference key="1">
    <citation type="journal article" date="2004" name="Nature">
        <title>Genome evolution in yeasts.</title>
        <authorList>
            <person name="Dujon B."/>
            <person name="Sherman D."/>
            <person name="Fischer G."/>
            <person name="Durrens P."/>
            <person name="Casaregola S."/>
            <person name="Lafontaine I."/>
            <person name="de Montigny J."/>
            <person name="Marck C."/>
            <person name="Neuveglise C."/>
            <person name="Talla E."/>
            <person name="Goffard N."/>
            <person name="Frangeul L."/>
            <person name="Aigle M."/>
            <person name="Anthouard V."/>
            <person name="Babour A."/>
            <person name="Barbe V."/>
            <person name="Barnay S."/>
            <person name="Blanchin S."/>
            <person name="Beckerich J.-M."/>
            <person name="Beyne E."/>
            <person name="Bleykasten C."/>
            <person name="Boisrame A."/>
            <person name="Boyer J."/>
            <person name="Cattolico L."/>
            <person name="Confanioleri F."/>
            <person name="de Daruvar A."/>
            <person name="Despons L."/>
            <person name="Fabre E."/>
            <person name="Fairhead C."/>
            <person name="Ferry-Dumazet H."/>
            <person name="Groppi A."/>
            <person name="Hantraye F."/>
            <person name="Hennequin C."/>
            <person name="Jauniaux N."/>
            <person name="Joyet P."/>
            <person name="Kachouri R."/>
            <person name="Kerrest A."/>
            <person name="Koszul R."/>
            <person name="Lemaire M."/>
            <person name="Lesur I."/>
            <person name="Ma L."/>
            <person name="Muller H."/>
            <person name="Nicaud J.-M."/>
            <person name="Nikolski M."/>
            <person name="Oztas S."/>
            <person name="Ozier-Kalogeropoulos O."/>
            <person name="Pellenz S."/>
            <person name="Potier S."/>
            <person name="Richard G.-F."/>
            <person name="Straub M.-L."/>
            <person name="Suleau A."/>
            <person name="Swennen D."/>
            <person name="Tekaia F."/>
            <person name="Wesolowski-Louvel M."/>
            <person name="Westhof E."/>
            <person name="Wirth B."/>
            <person name="Zeniou-Meyer M."/>
            <person name="Zivanovic Y."/>
            <person name="Bolotin-Fukuhara M."/>
            <person name="Thierry A."/>
            <person name="Bouchier C."/>
            <person name="Caudron B."/>
            <person name="Scarpelli C."/>
            <person name="Gaillardin C."/>
            <person name="Weissenbach J."/>
            <person name="Wincker P."/>
            <person name="Souciet J.-L."/>
        </authorList>
    </citation>
    <scope>NUCLEOTIDE SEQUENCE [LARGE SCALE GENOMIC DNA]</scope>
    <source>
        <strain>ATCC 36239 / CBS 767 / BCRC 21394 / JCM 1990 / NBRC 0083 / IGC 2968</strain>
    </source>
</reference>
<sequence length="412" mass="47856">MYCRVFTHFSLYRLYTLSDNININKTNHNKSIGLHQHRVNYMPRSMTASSSQLKRIETRIESLSESLSKSNARKPLGKFQLNTFDNNKITKLQNEKVRPSKSSHIPVKSPIRKKGHSPAQVLQNERMDTKLLLQKLPSASRHMTLDDFEIGKVLGKGKLGKVYCVKHKTSGYIAALKVMAKKDLIDLKLEKNFRREIEIQSNLIHPKISRLYGFFYDHKNVYLILEYSIHGELYHHLKVQRRFNDATASHYIYQVALALDYLHTKHIIHRDIKPENILLSTDNCIKLSDFGWSVKSSPSSSTKRLTICGTLDYLPPEMIESNEHDYTVDIWSLGILCYEFLVGKPPFEEIDKNSTYKRIAKVDLKIPSFLSSEATDLILRLLQKSPKKRITLAEVMNHPWIMNNQQYWPNEN</sequence>
<feature type="chain" id="PRO_0000086027" description="Aurora kinase">
    <location>
        <begin position="1"/>
        <end position="412"/>
    </location>
</feature>
<feature type="domain" description="Protein kinase" evidence="4">
    <location>
        <begin position="148"/>
        <end position="401"/>
    </location>
</feature>
<feature type="region of interest" description="Disordered" evidence="6">
    <location>
        <begin position="94"/>
        <end position="119"/>
    </location>
</feature>
<feature type="active site" description="Proton acceptor" evidence="4 5">
    <location>
        <position position="271"/>
    </location>
</feature>
<feature type="binding site" evidence="4">
    <location>
        <begin position="154"/>
        <end position="162"/>
    </location>
    <ligand>
        <name>ATP</name>
        <dbReference type="ChEBI" id="CHEBI:30616"/>
    </ligand>
</feature>
<feature type="binding site" evidence="4">
    <location>
        <position position="177"/>
    </location>
    <ligand>
        <name>ATP</name>
        <dbReference type="ChEBI" id="CHEBI:30616"/>
    </ligand>
</feature>
<keyword id="KW-0067">ATP-binding</keyword>
<keyword id="KW-0131">Cell cycle</keyword>
<keyword id="KW-0137">Centromere</keyword>
<keyword id="KW-0158">Chromosome</keyword>
<keyword id="KW-0159">Chromosome partition</keyword>
<keyword id="KW-0963">Cytoplasm</keyword>
<keyword id="KW-0206">Cytoskeleton</keyword>
<keyword id="KW-0418">Kinase</keyword>
<keyword id="KW-0995">Kinetochore</keyword>
<keyword id="KW-0547">Nucleotide-binding</keyword>
<keyword id="KW-0539">Nucleus</keyword>
<keyword id="KW-1185">Reference proteome</keyword>
<keyword id="KW-0723">Serine/threonine-protein kinase</keyword>
<keyword id="KW-0808">Transferase</keyword>
<accession>Q6BVA0</accession>
<name>AURK_DEBHA</name>
<comment type="function">
    <text evidence="3">Component of the chromosomal passenger complex (CPC), a complex that acts as a key regulator of chromosome segregation and cytokinesis. Has a role in error-correction of aberrent kinetochore-microtubule attachments to ensure that sister kinetochores become bioriented and connect to opposite poles by promoting spindle assembly checkpoint signaling.</text>
</comment>
<comment type="catalytic activity">
    <reaction evidence="2">
        <text>L-seryl-[protein] + ATP = O-phospho-L-seryl-[protein] + ADP + H(+)</text>
        <dbReference type="Rhea" id="RHEA:17989"/>
        <dbReference type="Rhea" id="RHEA-COMP:9863"/>
        <dbReference type="Rhea" id="RHEA-COMP:11604"/>
        <dbReference type="ChEBI" id="CHEBI:15378"/>
        <dbReference type="ChEBI" id="CHEBI:29999"/>
        <dbReference type="ChEBI" id="CHEBI:30616"/>
        <dbReference type="ChEBI" id="CHEBI:83421"/>
        <dbReference type="ChEBI" id="CHEBI:456216"/>
        <dbReference type="EC" id="2.7.11.1"/>
    </reaction>
</comment>
<comment type="catalytic activity">
    <reaction>
        <text>L-threonyl-[protein] + ATP = O-phospho-L-threonyl-[protein] + ADP + H(+)</text>
        <dbReference type="Rhea" id="RHEA:46608"/>
        <dbReference type="Rhea" id="RHEA-COMP:11060"/>
        <dbReference type="Rhea" id="RHEA-COMP:11605"/>
        <dbReference type="ChEBI" id="CHEBI:15378"/>
        <dbReference type="ChEBI" id="CHEBI:30013"/>
        <dbReference type="ChEBI" id="CHEBI:30616"/>
        <dbReference type="ChEBI" id="CHEBI:61977"/>
        <dbReference type="ChEBI" id="CHEBI:456216"/>
        <dbReference type="EC" id="2.7.11.1"/>
    </reaction>
</comment>
<comment type="subcellular location">
    <subcellularLocation>
        <location evidence="1">Nucleus</location>
    </subcellularLocation>
    <subcellularLocation>
        <location evidence="1">Cytoplasm</location>
        <location evidence="1">Cytoskeleton</location>
        <location evidence="1">Spindle</location>
    </subcellularLocation>
    <subcellularLocation>
        <location evidence="1">Chromosome</location>
        <location evidence="1">Centromere</location>
        <location evidence="1">Kinetochore</location>
    </subcellularLocation>
    <text evidence="1">Associates with the mitotic spindle and on elongated and disassembling spindles. Also associated with the kinetochore (By similarity).</text>
</comment>
<comment type="similarity">
    <text evidence="4">Belongs to the protein kinase superfamily. Ser/Thr protein kinase family. Aurora subfamily.</text>
</comment>
<organism>
    <name type="scientific">Debaryomyces hansenii (strain ATCC 36239 / CBS 767 / BCRC 21394 / JCM 1990 / NBRC 0083 / IGC 2968)</name>
    <name type="common">Yeast</name>
    <name type="synonym">Torulaspora hansenii</name>
    <dbReference type="NCBI Taxonomy" id="284592"/>
    <lineage>
        <taxon>Eukaryota</taxon>
        <taxon>Fungi</taxon>
        <taxon>Dikarya</taxon>
        <taxon>Ascomycota</taxon>
        <taxon>Saccharomycotina</taxon>
        <taxon>Pichiomycetes</taxon>
        <taxon>Debaryomycetaceae</taxon>
        <taxon>Debaryomyces</taxon>
    </lineage>
</organism>
<gene>
    <name type="primary">IPL1</name>
    <name type="ordered locus">DEHA2C04246g</name>
</gene>
<protein>
    <recommendedName>
        <fullName>Aurora kinase</fullName>
        <ecNumber evidence="3">2.7.11.1</ecNumber>
    </recommendedName>
    <alternativeName>
        <fullName>Spindle assembly checkpoint kinase</fullName>
    </alternativeName>
</protein>